<protein>
    <recommendedName>
        <fullName evidence="1">Translation initiation factor IF-3</fullName>
    </recommendedName>
</protein>
<accession>Q5HWW2</accession>
<comment type="function">
    <text evidence="1">IF-3 binds to the 30S ribosomal subunit and shifts the equilibrium between 70S ribosomes and their 50S and 30S subunits in favor of the free subunits, thus enhancing the availability of 30S subunits on which protein synthesis initiation begins.</text>
</comment>
<comment type="subunit">
    <text evidence="1">Monomer.</text>
</comment>
<comment type="subcellular location">
    <subcellularLocation>
        <location evidence="1">Cytoplasm</location>
    </subcellularLocation>
</comment>
<comment type="similarity">
    <text evidence="1">Belongs to the IF-3 family.</text>
</comment>
<keyword id="KW-0002">3D-structure</keyword>
<keyword id="KW-0963">Cytoplasm</keyword>
<keyword id="KW-0396">Initiation factor</keyword>
<keyword id="KW-0648">Protein biosynthesis</keyword>
<sequence>MSKEKEVLLNEEIRADEIRCVGDDGKVYGIISSDEALEIANRLGLDLVMIAADAKPPVCKIMDYGKFRYQQEKKQKEAKKKQKVIDIKEIKLSVKIAQNDINYKVKHALEFLEQGKHVRFRVFLKGREMATPEAGVALLEKIWTMIENEANRDKEPNFEGRYVNMLVTPKKA</sequence>
<evidence type="ECO:0000255" key="1">
    <source>
        <dbReference type="HAMAP-Rule" id="MF_00080"/>
    </source>
</evidence>
<evidence type="ECO:0007829" key="2">
    <source>
        <dbReference type="PDB" id="2M71"/>
    </source>
</evidence>
<organism>
    <name type="scientific">Campylobacter jejuni (strain RM1221)</name>
    <dbReference type="NCBI Taxonomy" id="195099"/>
    <lineage>
        <taxon>Bacteria</taxon>
        <taxon>Pseudomonadati</taxon>
        <taxon>Campylobacterota</taxon>
        <taxon>Epsilonproteobacteria</taxon>
        <taxon>Campylobacterales</taxon>
        <taxon>Campylobacteraceae</taxon>
        <taxon>Campylobacter</taxon>
    </lineage>
</organism>
<dbReference type="EMBL" id="CP000025">
    <property type="protein sequence ID" value="AAW34794.1"/>
    <property type="molecule type" value="Genomic_DNA"/>
</dbReference>
<dbReference type="RefSeq" id="WP_002851726.1">
    <property type="nucleotide sequence ID" value="NC_003912.7"/>
</dbReference>
<dbReference type="PDB" id="2M71">
    <property type="method" value="NMR"/>
    <property type="chains" value="A=83-172"/>
</dbReference>
<dbReference type="PDBsum" id="2M71"/>
<dbReference type="BMRB" id="Q5HWW2"/>
<dbReference type="SMR" id="Q5HWW2"/>
<dbReference type="KEGG" id="cjr:CJE0200"/>
<dbReference type="HOGENOM" id="CLU_054919_3_2_7"/>
<dbReference type="EvolutionaryTrace" id="Q5HWW2"/>
<dbReference type="GO" id="GO:0005829">
    <property type="term" value="C:cytosol"/>
    <property type="evidence" value="ECO:0007669"/>
    <property type="project" value="TreeGrafter"/>
</dbReference>
<dbReference type="GO" id="GO:0016020">
    <property type="term" value="C:membrane"/>
    <property type="evidence" value="ECO:0007669"/>
    <property type="project" value="TreeGrafter"/>
</dbReference>
<dbReference type="GO" id="GO:0043022">
    <property type="term" value="F:ribosome binding"/>
    <property type="evidence" value="ECO:0007669"/>
    <property type="project" value="TreeGrafter"/>
</dbReference>
<dbReference type="GO" id="GO:0003743">
    <property type="term" value="F:translation initiation factor activity"/>
    <property type="evidence" value="ECO:0007669"/>
    <property type="project" value="UniProtKB-UniRule"/>
</dbReference>
<dbReference type="GO" id="GO:0032790">
    <property type="term" value="P:ribosome disassembly"/>
    <property type="evidence" value="ECO:0007669"/>
    <property type="project" value="TreeGrafter"/>
</dbReference>
<dbReference type="FunFam" id="3.10.20.80:FF:000001">
    <property type="entry name" value="Translation initiation factor IF-3"/>
    <property type="match status" value="1"/>
</dbReference>
<dbReference type="Gene3D" id="3.30.110.10">
    <property type="entry name" value="Translation initiation factor 3 (IF-3), C-terminal domain"/>
    <property type="match status" value="1"/>
</dbReference>
<dbReference type="Gene3D" id="3.10.20.80">
    <property type="entry name" value="Translation initiation factor 3 (IF-3), N-terminal domain"/>
    <property type="match status" value="1"/>
</dbReference>
<dbReference type="HAMAP" id="MF_00080">
    <property type="entry name" value="IF_3"/>
    <property type="match status" value="1"/>
</dbReference>
<dbReference type="InterPro" id="IPR036788">
    <property type="entry name" value="T_IF-3_C_sf"/>
</dbReference>
<dbReference type="InterPro" id="IPR036787">
    <property type="entry name" value="T_IF-3_N_sf"/>
</dbReference>
<dbReference type="InterPro" id="IPR019813">
    <property type="entry name" value="Translation_initiation_fac3_CS"/>
</dbReference>
<dbReference type="InterPro" id="IPR001288">
    <property type="entry name" value="Translation_initiation_fac_3"/>
</dbReference>
<dbReference type="InterPro" id="IPR019815">
    <property type="entry name" value="Translation_initiation_fac_3_C"/>
</dbReference>
<dbReference type="InterPro" id="IPR019814">
    <property type="entry name" value="Translation_initiation_fac_3_N"/>
</dbReference>
<dbReference type="NCBIfam" id="TIGR00168">
    <property type="entry name" value="infC"/>
    <property type="match status" value="1"/>
</dbReference>
<dbReference type="PANTHER" id="PTHR10938">
    <property type="entry name" value="TRANSLATION INITIATION FACTOR IF-3"/>
    <property type="match status" value="1"/>
</dbReference>
<dbReference type="PANTHER" id="PTHR10938:SF0">
    <property type="entry name" value="TRANSLATION INITIATION FACTOR IF-3, MITOCHONDRIAL"/>
    <property type="match status" value="1"/>
</dbReference>
<dbReference type="Pfam" id="PF00707">
    <property type="entry name" value="IF3_C"/>
    <property type="match status" value="1"/>
</dbReference>
<dbReference type="Pfam" id="PF05198">
    <property type="entry name" value="IF3_N"/>
    <property type="match status" value="1"/>
</dbReference>
<dbReference type="SUPFAM" id="SSF55200">
    <property type="entry name" value="Translation initiation factor IF3, C-terminal domain"/>
    <property type="match status" value="1"/>
</dbReference>
<dbReference type="SUPFAM" id="SSF54364">
    <property type="entry name" value="Translation initiation factor IF3, N-terminal domain"/>
    <property type="match status" value="1"/>
</dbReference>
<dbReference type="PROSITE" id="PS00938">
    <property type="entry name" value="IF3"/>
    <property type="match status" value="1"/>
</dbReference>
<gene>
    <name evidence="1" type="primary">infC</name>
    <name type="ordered locus">CJE0200</name>
</gene>
<feature type="chain" id="PRO_0000177499" description="Translation initiation factor IF-3">
    <location>
        <begin position="1"/>
        <end position="172"/>
    </location>
</feature>
<feature type="strand" evidence="2">
    <location>
        <begin position="87"/>
        <end position="95"/>
    </location>
</feature>
<feature type="helix" evidence="2">
    <location>
        <begin position="98"/>
        <end position="113"/>
    </location>
</feature>
<feature type="strand" evidence="2">
    <location>
        <begin position="117"/>
        <end position="123"/>
    </location>
</feature>
<feature type="helix" evidence="2">
    <location>
        <begin position="127"/>
        <end position="130"/>
    </location>
</feature>
<feature type="helix" evidence="2">
    <location>
        <begin position="133"/>
        <end position="146"/>
    </location>
</feature>
<feature type="turn" evidence="2">
    <location>
        <begin position="147"/>
        <end position="149"/>
    </location>
</feature>
<feature type="strand" evidence="2">
    <location>
        <begin position="150"/>
        <end position="152"/>
    </location>
</feature>
<feature type="strand" evidence="2">
    <location>
        <begin position="160"/>
        <end position="169"/>
    </location>
</feature>
<reference key="1">
    <citation type="journal article" date="2005" name="PLoS Biol.">
        <title>Major structural differences and novel potential virulence mechanisms from the genomes of multiple Campylobacter species.</title>
        <authorList>
            <person name="Fouts D.E."/>
            <person name="Mongodin E.F."/>
            <person name="Mandrell R.E."/>
            <person name="Miller W.G."/>
            <person name="Rasko D.A."/>
            <person name="Ravel J."/>
            <person name="Brinkac L.M."/>
            <person name="DeBoy R.T."/>
            <person name="Parker C.T."/>
            <person name="Daugherty S.C."/>
            <person name="Dodson R.J."/>
            <person name="Durkin A.S."/>
            <person name="Madupu R."/>
            <person name="Sullivan S.A."/>
            <person name="Shetty J.U."/>
            <person name="Ayodeji M.A."/>
            <person name="Shvartsbeyn A."/>
            <person name="Schatz M.C."/>
            <person name="Badger J.H."/>
            <person name="Fraser C.M."/>
            <person name="Nelson K.E."/>
        </authorList>
    </citation>
    <scope>NUCLEOTIDE SEQUENCE [LARGE SCALE GENOMIC DNA]</scope>
    <source>
        <strain>RM1221</strain>
    </source>
</reference>
<proteinExistence type="evidence at protein level"/>
<name>IF3_CAMJR</name>